<sequence length="236" mass="26334">MDFSQGLTPARLIRRYKRFLADVEIEDGTIITVYCPNTGTMRTCSTPNSPVMLSISDNPKRKYAHTLEMIFENHTWIGVNTGRTNSIVAKAILNGSIAEFSGATKVQREITVSKGSRLDLLVDHADQKSYIEIKNCSMAENRRAMFPDAVTARGTKHLRELIKLVKQGENAYIFFLIQREDADSFSPATHIDPLYANTLKEALQQGVQALAYQASVILRALPIILNGSNSPHLPQR</sequence>
<organism>
    <name type="scientific">Desulfotalea psychrophila (strain LSv54 / DSM 12343)</name>
    <dbReference type="NCBI Taxonomy" id="177439"/>
    <lineage>
        <taxon>Bacteria</taxon>
        <taxon>Pseudomonadati</taxon>
        <taxon>Thermodesulfobacteriota</taxon>
        <taxon>Desulfobulbia</taxon>
        <taxon>Desulfobulbales</taxon>
        <taxon>Desulfocapsaceae</taxon>
        <taxon>Desulfotalea</taxon>
    </lineage>
</organism>
<comment type="similarity">
    <text evidence="1">Belongs to the SfsA family.</text>
</comment>
<comment type="sequence caution" evidence="2">
    <conflict type="erroneous initiation">
        <sequence resource="EMBL-CDS" id="CAG34833"/>
    </conflict>
</comment>
<proteinExistence type="inferred from homology"/>
<reference key="1">
    <citation type="journal article" date="2004" name="Environ. Microbiol.">
        <title>The genome of Desulfotalea psychrophila, a sulfate-reducing bacterium from permanently cold Arctic sediments.</title>
        <authorList>
            <person name="Rabus R."/>
            <person name="Ruepp A."/>
            <person name="Frickey T."/>
            <person name="Rattei T."/>
            <person name="Fartmann B."/>
            <person name="Stark M."/>
            <person name="Bauer M."/>
            <person name="Zibat A."/>
            <person name="Lombardot T."/>
            <person name="Becker I."/>
            <person name="Amann J."/>
            <person name="Gellner K."/>
            <person name="Teeling H."/>
            <person name="Leuschner W.D."/>
            <person name="Gloeckner F.-O."/>
            <person name="Lupas A.N."/>
            <person name="Amann R."/>
            <person name="Klenk H.-P."/>
        </authorList>
    </citation>
    <scope>NUCLEOTIDE SEQUENCE [LARGE SCALE GENOMIC DNA]</scope>
    <source>
        <strain>DSM 12343 / LSv54</strain>
    </source>
</reference>
<keyword id="KW-1185">Reference proteome</keyword>
<gene>
    <name evidence="1" type="primary">sfsA</name>
    <name type="ordered locus">DP0104</name>
</gene>
<name>SFSA_DESPS</name>
<evidence type="ECO:0000255" key="1">
    <source>
        <dbReference type="HAMAP-Rule" id="MF_00095"/>
    </source>
</evidence>
<evidence type="ECO:0000305" key="2"/>
<dbReference type="EMBL" id="CR522870">
    <property type="protein sequence ID" value="CAG34833.1"/>
    <property type="status" value="ALT_INIT"/>
    <property type="molecule type" value="Genomic_DNA"/>
</dbReference>
<dbReference type="RefSeq" id="WP_041277434.1">
    <property type="nucleotide sequence ID" value="NC_006138.1"/>
</dbReference>
<dbReference type="SMR" id="Q6AS42"/>
<dbReference type="STRING" id="177439.DP0104"/>
<dbReference type="KEGG" id="dps:DP0104"/>
<dbReference type="eggNOG" id="COG1489">
    <property type="taxonomic scope" value="Bacteria"/>
</dbReference>
<dbReference type="HOGENOM" id="CLU_052299_2_0_7"/>
<dbReference type="OrthoDB" id="9802365at2"/>
<dbReference type="Proteomes" id="UP000000602">
    <property type="component" value="Chromosome"/>
</dbReference>
<dbReference type="GO" id="GO:0003677">
    <property type="term" value="F:DNA binding"/>
    <property type="evidence" value="ECO:0007669"/>
    <property type="project" value="InterPro"/>
</dbReference>
<dbReference type="CDD" id="cd22359">
    <property type="entry name" value="SfsA-like_bacterial"/>
    <property type="match status" value="1"/>
</dbReference>
<dbReference type="FunFam" id="2.40.50.580:FF:000001">
    <property type="entry name" value="Sugar fermentation stimulation protein A"/>
    <property type="match status" value="1"/>
</dbReference>
<dbReference type="Gene3D" id="2.40.50.580">
    <property type="match status" value="1"/>
</dbReference>
<dbReference type="Gene3D" id="3.40.1350.60">
    <property type="match status" value="1"/>
</dbReference>
<dbReference type="HAMAP" id="MF_00095">
    <property type="entry name" value="SfsA"/>
    <property type="match status" value="1"/>
</dbReference>
<dbReference type="InterPro" id="IPR005224">
    <property type="entry name" value="SfsA"/>
</dbReference>
<dbReference type="InterPro" id="IPR040452">
    <property type="entry name" value="SfsA_C"/>
</dbReference>
<dbReference type="InterPro" id="IPR041465">
    <property type="entry name" value="SfsA_N"/>
</dbReference>
<dbReference type="NCBIfam" id="TIGR00230">
    <property type="entry name" value="sfsA"/>
    <property type="match status" value="1"/>
</dbReference>
<dbReference type="PANTHER" id="PTHR30545">
    <property type="entry name" value="SUGAR FERMENTATION STIMULATION PROTEIN A"/>
    <property type="match status" value="1"/>
</dbReference>
<dbReference type="PANTHER" id="PTHR30545:SF2">
    <property type="entry name" value="SUGAR FERMENTATION STIMULATION PROTEIN A"/>
    <property type="match status" value="1"/>
</dbReference>
<dbReference type="Pfam" id="PF03749">
    <property type="entry name" value="SfsA"/>
    <property type="match status" value="1"/>
</dbReference>
<dbReference type="Pfam" id="PF17746">
    <property type="entry name" value="SfsA_N"/>
    <property type="match status" value="1"/>
</dbReference>
<protein>
    <recommendedName>
        <fullName evidence="1">Sugar fermentation stimulation protein homolog</fullName>
    </recommendedName>
</protein>
<feature type="chain" id="PRO_0000152280" description="Sugar fermentation stimulation protein homolog">
    <location>
        <begin position="1"/>
        <end position="236"/>
    </location>
</feature>
<accession>Q6AS42</accession>